<comment type="function">
    <text evidence="1">Catalyzes the transfer of a dimethylallyl group onto the adenine at position 37 in tRNAs that read codons beginning with uridine, leading to the formation of N6-(dimethylallyl)adenosine (i(6)A).</text>
</comment>
<comment type="catalytic activity">
    <reaction evidence="1">
        <text>adenosine(37) in tRNA + dimethylallyl diphosphate = N(6)-dimethylallyladenosine(37) in tRNA + diphosphate</text>
        <dbReference type="Rhea" id="RHEA:26482"/>
        <dbReference type="Rhea" id="RHEA-COMP:10162"/>
        <dbReference type="Rhea" id="RHEA-COMP:10375"/>
        <dbReference type="ChEBI" id="CHEBI:33019"/>
        <dbReference type="ChEBI" id="CHEBI:57623"/>
        <dbReference type="ChEBI" id="CHEBI:74411"/>
        <dbReference type="ChEBI" id="CHEBI:74415"/>
        <dbReference type="EC" id="2.5.1.75"/>
    </reaction>
</comment>
<comment type="cofactor">
    <cofactor evidence="1">
        <name>Mg(2+)</name>
        <dbReference type="ChEBI" id="CHEBI:18420"/>
    </cofactor>
</comment>
<comment type="subunit">
    <text evidence="1">Monomer.</text>
</comment>
<comment type="similarity">
    <text evidence="1">Belongs to the IPP transferase family.</text>
</comment>
<comment type="sequence caution" evidence="2">
    <conflict type="erroneous initiation">
        <sequence resource="EMBL-CDS" id="AAV79914"/>
    </conflict>
</comment>
<dbReference type="EC" id="2.5.1.75" evidence="1"/>
<dbReference type="EMBL" id="CP000026">
    <property type="protein sequence ID" value="AAV79914.1"/>
    <property type="status" value="ALT_INIT"/>
    <property type="molecule type" value="Genomic_DNA"/>
</dbReference>
<dbReference type="RefSeq" id="WP_001000735.1">
    <property type="nucleotide sequence ID" value="NC_006511.1"/>
</dbReference>
<dbReference type="SMR" id="Q5PL48"/>
<dbReference type="KEGG" id="spt:SPA4177"/>
<dbReference type="HOGENOM" id="CLU_032616_0_0_6"/>
<dbReference type="Proteomes" id="UP000008185">
    <property type="component" value="Chromosome"/>
</dbReference>
<dbReference type="GO" id="GO:0005524">
    <property type="term" value="F:ATP binding"/>
    <property type="evidence" value="ECO:0007669"/>
    <property type="project" value="UniProtKB-UniRule"/>
</dbReference>
<dbReference type="GO" id="GO:0052381">
    <property type="term" value="F:tRNA dimethylallyltransferase activity"/>
    <property type="evidence" value="ECO:0007669"/>
    <property type="project" value="UniProtKB-UniRule"/>
</dbReference>
<dbReference type="GO" id="GO:0006400">
    <property type="term" value="P:tRNA modification"/>
    <property type="evidence" value="ECO:0007669"/>
    <property type="project" value="TreeGrafter"/>
</dbReference>
<dbReference type="FunFam" id="1.10.20.140:FF:000001">
    <property type="entry name" value="tRNA dimethylallyltransferase"/>
    <property type="match status" value="1"/>
</dbReference>
<dbReference type="Gene3D" id="1.10.20.140">
    <property type="match status" value="1"/>
</dbReference>
<dbReference type="Gene3D" id="3.40.50.300">
    <property type="entry name" value="P-loop containing nucleotide triphosphate hydrolases"/>
    <property type="match status" value="1"/>
</dbReference>
<dbReference type="HAMAP" id="MF_00185">
    <property type="entry name" value="IPP_trans"/>
    <property type="match status" value="1"/>
</dbReference>
<dbReference type="InterPro" id="IPR039657">
    <property type="entry name" value="Dimethylallyltransferase"/>
</dbReference>
<dbReference type="InterPro" id="IPR018022">
    <property type="entry name" value="IPT"/>
</dbReference>
<dbReference type="InterPro" id="IPR027417">
    <property type="entry name" value="P-loop_NTPase"/>
</dbReference>
<dbReference type="NCBIfam" id="TIGR00174">
    <property type="entry name" value="miaA"/>
    <property type="match status" value="1"/>
</dbReference>
<dbReference type="PANTHER" id="PTHR11088">
    <property type="entry name" value="TRNA DIMETHYLALLYLTRANSFERASE"/>
    <property type="match status" value="1"/>
</dbReference>
<dbReference type="PANTHER" id="PTHR11088:SF60">
    <property type="entry name" value="TRNA DIMETHYLALLYLTRANSFERASE"/>
    <property type="match status" value="1"/>
</dbReference>
<dbReference type="Pfam" id="PF01715">
    <property type="entry name" value="IPPT"/>
    <property type="match status" value="1"/>
</dbReference>
<dbReference type="SUPFAM" id="SSF52540">
    <property type="entry name" value="P-loop containing nucleoside triphosphate hydrolases"/>
    <property type="match status" value="1"/>
</dbReference>
<gene>
    <name evidence="1" type="primary">miaA</name>
    <name type="ordered locus">SPA4177</name>
</gene>
<feature type="chain" id="PRO_0000377306" description="tRNA dimethylallyltransferase">
    <location>
        <begin position="1"/>
        <end position="316"/>
    </location>
</feature>
<feature type="region of interest" description="Interaction with substrate tRNA" evidence="1">
    <location>
        <begin position="42"/>
        <end position="45"/>
    </location>
</feature>
<feature type="region of interest" description="Interaction with substrate tRNA" evidence="1">
    <location>
        <begin position="166"/>
        <end position="170"/>
    </location>
</feature>
<feature type="region of interest" description="Interaction with substrate tRNA" evidence="1">
    <location>
        <begin position="247"/>
        <end position="252"/>
    </location>
</feature>
<feature type="binding site" evidence="1">
    <location>
        <begin position="17"/>
        <end position="24"/>
    </location>
    <ligand>
        <name>ATP</name>
        <dbReference type="ChEBI" id="CHEBI:30616"/>
    </ligand>
</feature>
<feature type="binding site" evidence="1">
    <location>
        <begin position="19"/>
        <end position="24"/>
    </location>
    <ligand>
        <name>substrate</name>
    </ligand>
</feature>
<feature type="site" description="Interaction with substrate tRNA" evidence="1">
    <location>
        <position position="108"/>
    </location>
</feature>
<feature type="site" description="Interaction with substrate tRNA" evidence="1">
    <location>
        <position position="130"/>
    </location>
</feature>
<keyword id="KW-0067">ATP-binding</keyword>
<keyword id="KW-0460">Magnesium</keyword>
<keyword id="KW-0547">Nucleotide-binding</keyword>
<keyword id="KW-0808">Transferase</keyword>
<keyword id="KW-0819">tRNA processing</keyword>
<evidence type="ECO:0000255" key="1">
    <source>
        <dbReference type="HAMAP-Rule" id="MF_00185"/>
    </source>
</evidence>
<evidence type="ECO:0000305" key="2"/>
<name>MIAA_SALPA</name>
<organism>
    <name type="scientific">Salmonella paratyphi A (strain ATCC 9150 / SARB42)</name>
    <dbReference type="NCBI Taxonomy" id="295319"/>
    <lineage>
        <taxon>Bacteria</taxon>
        <taxon>Pseudomonadati</taxon>
        <taxon>Pseudomonadota</taxon>
        <taxon>Gammaproteobacteria</taxon>
        <taxon>Enterobacterales</taxon>
        <taxon>Enterobacteriaceae</taxon>
        <taxon>Salmonella</taxon>
    </lineage>
</organism>
<sequence length="316" mass="35144">MNDVSKASLPKAIFLMGPTASGKTALAIELRKVLPVELISVDSALIYRGMDIGTAKPNADELKAAPHRLLDIRDPSQAYSAADFRRDALAQMAEITSAGRIPLLVGGTMLYFKALLEGLSPLPSADPEVRSRIEQQAAELGWEALHQQLQEIDPVAAARIHPNDPQRLSRALEVFFISGKTLTELTQTSGDALPYQVHQFAIAPASRELLHQRIELRFHQMLASGFEAEVRALFARGDLHTDLPSIRCVGYRQMWSYIEGEISYDEMVYRGVCATRQLAKRQMTWLRGWEGGRWLDSENPDRARKEVLQVVGAIAD</sequence>
<protein>
    <recommendedName>
        <fullName evidence="1">tRNA dimethylallyltransferase</fullName>
        <ecNumber evidence="1">2.5.1.75</ecNumber>
    </recommendedName>
    <alternativeName>
        <fullName evidence="1">Dimethylallyl diphosphate:tRNA dimethylallyltransferase</fullName>
        <shortName evidence="1">DMAPP:tRNA dimethylallyltransferase</shortName>
        <shortName evidence="1">DMATase</shortName>
    </alternativeName>
    <alternativeName>
        <fullName evidence="1">Isopentenyl-diphosphate:tRNA isopentenyltransferase</fullName>
        <shortName evidence="1">IPP transferase</shortName>
        <shortName evidence="1">IPPT</shortName>
        <shortName evidence="1">IPTase</shortName>
    </alternativeName>
</protein>
<accession>Q5PL48</accession>
<reference key="1">
    <citation type="journal article" date="2004" name="Nat. Genet.">
        <title>Comparison of genome degradation in Paratyphi A and Typhi, human-restricted serovars of Salmonella enterica that cause typhoid.</title>
        <authorList>
            <person name="McClelland M."/>
            <person name="Sanderson K.E."/>
            <person name="Clifton S.W."/>
            <person name="Latreille P."/>
            <person name="Porwollik S."/>
            <person name="Sabo A."/>
            <person name="Meyer R."/>
            <person name="Bieri T."/>
            <person name="Ozersky P."/>
            <person name="McLellan M."/>
            <person name="Harkins C.R."/>
            <person name="Wang C."/>
            <person name="Nguyen C."/>
            <person name="Berghoff A."/>
            <person name="Elliott G."/>
            <person name="Kohlberg S."/>
            <person name="Strong C."/>
            <person name="Du F."/>
            <person name="Carter J."/>
            <person name="Kremizki C."/>
            <person name="Layman D."/>
            <person name="Leonard S."/>
            <person name="Sun H."/>
            <person name="Fulton L."/>
            <person name="Nash W."/>
            <person name="Miner T."/>
            <person name="Minx P."/>
            <person name="Delehaunty K."/>
            <person name="Fronick C."/>
            <person name="Magrini V."/>
            <person name="Nhan M."/>
            <person name="Warren W."/>
            <person name="Florea L."/>
            <person name="Spieth J."/>
            <person name="Wilson R.K."/>
        </authorList>
    </citation>
    <scope>NUCLEOTIDE SEQUENCE [LARGE SCALE GENOMIC DNA]</scope>
    <source>
        <strain>ATCC 9150 / SARB42</strain>
    </source>
</reference>
<proteinExistence type="inferred from homology"/>